<feature type="transit peptide" description="Mitochondrion" evidence="5">
    <location>
        <begin position="1"/>
        <end position="40"/>
    </location>
</feature>
<feature type="chain" id="PRO_0000310981" description="2-oxoglutarate dehydrogenase complex component E1">
    <location>
        <begin position="41"/>
        <end position="1023"/>
    </location>
</feature>
<feature type="binding site" evidence="1">
    <location>
        <position position="143"/>
    </location>
    <ligand>
        <name>Ca(2+)</name>
        <dbReference type="ChEBI" id="CHEBI:29108"/>
    </ligand>
</feature>
<feature type="binding site" evidence="1">
    <location>
        <position position="156"/>
    </location>
    <ligand>
        <name>Ca(2+)</name>
        <dbReference type="ChEBI" id="CHEBI:29108"/>
    </ligand>
</feature>
<feature type="binding site" evidence="1">
    <location>
        <position position="158"/>
    </location>
    <ligand>
        <name>Ca(2+)</name>
        <dbReference type="ChEBI" id="CHEBI:29108"/>
    </ligand>
</feature>
<feature type="binding site" evidence="1">
    <location>
        <position position="312"/>
    </location>
    <ligand>
        <name>thiamine diphosphate</name>
        <dbReference type="ChEBI" id="CHEBI:58937"/>
    </ligand>
</feature>
<feature type="binding site" evidence="1">
    <location>
        <position position="411"/>
    </location>
    <ligand>
        <name>Mg(2+)</name>
        <dbReference type="ChEBI" id="CHEBI:18420"/>
    </ligand>
</feature>
<feature type="binding site" evidence="1">
    <location>
        <position position="411"/>
    </location>
    <ligand>
        <name>thiamine diphosphate</name>
        <dbReference type="ChEBI" id="CHEBI:58937"/>
    </ligand>
</feature>
<feature type="binding site" evidence="1">
    <location>
        <position position="444"/>
    </location>
    <ligand>
        <name>Mg(2+)</name>
        <dbReference type="ChEBI" id="CHEBI:18420"/>
    </ligand>
</feature>
<feature type="binding site" evidence="1">
    <location>
        <position position="444"/>
    </location>
    <ligand>
        <name>thiamine diphosphate</name>
        <dbReference type="ChEBI" id="CHEBI:58937"/>
    </ligand>
</feature>
<feature type="binding site" evidence="1">
    <location>
        <position position="446"/>
    </location>
    <ligand>
        <name>Mg(2+)</name>
        <dbReference type="ChEBI" id="CHEBI:18420"/>
    </ligand>
</feature>
<feature type="binding site" evidence="1">
    <location>
        <position position="446"/>
    </location>
    <ligand>
        <name>thiamine diphosphate</name>
        <dbReference type="ChEBI" id="CHEBI:58937"/>
    </ligand>
</feature>
<feature type="binding site" evidence="1">
    <location>
        <position position="676"/>
    </location>
    <ligand>
        <name>thiamine diphosphate</name>
        <dbReference type="ChEBI" id="CHEBI:58937"/>
    </ligand>
</feature>
<feature type="modified residue" description="N6-succinyllysine" evidence="3">
    <location>
        <position position="74"/>
    </location>
</feature>
<feature type="modified residue" description="Phosphoserine" evidence="3">
    <location>
        <position position="100"/>
    </location>
</feature>
<feature type="modified residue" description="N6-acetyllysine" evidence="3">
    <location>
        <position position="401"/>
    </location>
</feature>
<feature type="modified residue" description="N6-succinyllysine" evidence="3">
    <location>
        <position position="564"/>
    </location>
</feature>
<feature type="modified residue" description="N6-acetyllysine" evidence="1">
    <location>
        <position position="970"/>
    </location>
</feature>
<feature type="cross-link" description="Glycyl lysine isopeptide (Lys-Gly) (interchain with G-Cter in ubiquitin)" evidence="1">
    <location>
        <position position="534"/>
    </location>
</feature>
<comment type="function">
    <text evidence="1">2-oxoglutarate dehydrogenase (E1o) component of the 2-oxoglutarate dehydrogenase complex (OGDHC). Participates in the first step, rate limiting for the overall conversion of 2-oxoglutarate to succinyl-CoA and CO(2) catalyzed by the whole OGDHC. Catalyzes the irreversible decarboxylation of 2-oxoglutarate (alpha-ketoglutarate) via the thiamine diphosphate (ThDP) cofactor and subsequent transfer of the decarboxylated acyl intermediate on an oxidized dihydrolipoyl group that is covalently amidated to the E2 enzyme (dihydrolipoyllysine-residue succinyltransferase or DLST). Plays a key role in the Krebs (citric acid) cycle, which is a common pathway for oxidation of fuel molecules, including carbohydrates, fatty acids, and amino acids. Can catalyze the decarboxylation of 2-oxoadipate in vitro, but at a much lower rate than 2-oxoglutarate. Mainly active in the mitochondrion. A fraction of the 2-oxoglutarate dehydrogenase complex also localizes in the nucleus and is required for lysine succinylation of histones: associates with KAT2A on chromatin and provides succinyl-CoA to histone succinyltransferase KAT2A.</text>
</comment>
<comment type="catalytic activity">
    <reaction evidence="1">
        <text>N(6)-[(R)-lipoyl]-L-lysyl-[protein] + 2-oxoglutarate + H(+) = N(6)-[(R)-S(8)-succinyldihydrolipoyl]-L-lysyl-[protein] + CO2</text>
        <dbReference type="Rhea" id="RHEA:12188"/>
        <dbReference type="Rhea" id="RHEA-COMP:10474"/>
        <dbReference type="Rhea" id="RHEA-COMP:20092"/>
        <dbReference type="ChEBI" id="CHEBI:15378"/>
        <dbReference type="ChEBI" id="CHEBI:16526"/>
        <dbReference type="ChEBI" id="CHEBI:16810"/>
        <dbReference type="ChEBI" id="CHEBI:83099"/>
        <dbReference type="ChEBI" id="CHEBI:83120"/>
        <dbReference type="EC" id="1.2.4.2"/>
    </reaction>
    <physiologicalReaction direction="left-to-right" evidence="1">
        <dbReference type="Rhea" id="RHEA:12189"/>
    </physiologicalReaction>
</comment>
<comment type="cofactor">
    <cofactor evidence="1">
        <name>thiamine diphosphate</name>
        <dbReference type="ChEBI" id="CHEBI:58937"/>
    </cofactor>
    <cofactor evidence="1">
        <name>Mg(2+)</name>
        <dbReference type="ChEBI" id="CHEBI:18420"/>
    </cofactor>
</comment>
<comment type="activity regulation">
    <text evidence="1">Calcium ions and ADP stimulate, whereas ATP and NADH reduce catalytic activity.</text>
</comment>
<comment type="subunit">
    <text evidence="1 6">Homodimer (By similarity). The 2-oxoglutarate dehydrogenase complex is composed of OGDH (2-oxoglutarate dehydrogenase; E1), DLST (dihydrolipoamide succinyltransferase; E2), DLD (dihydrolipoamide dehydrogenase; E3) and the assembly factor KGD4 (PubMed:36854377). It contains multiple copies of the three enzymatic components (E1, E2 and E3). In the nucleus, the 2-oxoglutarate dehydrogenase complex associates with KAT2A. Interacts with ABHD11; this interaction maintains the functional lipoylation of the 2-oxoglutarate dehydrogenase complex (By similarity).</text>
</comment>
<comment type="subcellular location">
    <subcellularLocation>
        <location evidence="2">Mitochondrion</location>
    </subcellularLocation>
    <subcellularLocation>
        <location evidence="1">Nucleus</location>
    </subcellularLocation>
    <text evidence="1">Mainly localizes in the mitochondrion. A small fraction localizes to the nucleus, where the 2-oxoglutarate dehydrogenase complex is required for histone succinylation.</text>
</comment>
<comment type="miscellaneous">
    <text evidence="4">The mitochondrial 2-oxoglutarate and 2-oxoadipate dehydrogenase complexes (OGDHC and OADHC, respectively) share their E2 (DLST) and E3 (dihydrolipoyl dehydrogenase or DLD) components, but the E1 component is specific to each complex (E1o and E1a (DHTK1), respectively).</text>
</comment>
<comment type="similarity">
    <text evidence="7">Belongs to the alpha-ketoglutarate dehydrogenase family.</text>
</comment>
<keyword id="KW-0007">Acetylation</keyword>
<keyword id="KW-0106">Calcium</keyword>
<keyword id="KW-0324">Glycolysis</keyword>
<keyword id="KW-1017">Isopeptide bond</keyword>
<keyword id="KW-0460">Magnesium</keyword>
<keyword id="KW-0479">Metal-binding</keyword>
<keyword id="KW-0496">Mitochondrion</keyword>
<keyword id="KW-0539">Nucleus</keyword>
<keyword id="KW-0560">Oxidoreductase</keyword>
<keyword id="KW-0597">Phosphoprotein</keyword>
<keyword id="KW-1185">Reference proteome</keyword>
<keyword id="KW-0786">Thiamine pyrophosphate</keyword>
<keyword id="KW-0809">Transit peptide</keyword>
<keyword id="KW-0832">Ubl conjugation</keyword>
<dbReference type="EC" id="1.2.4.2" evidence="1"/>
<dbReference type="EMBL" id="BC118106">
    <property type="protein sequence ID" value="AAI18107.1"/>
    <property type="molecule type" value="mRNA"/>
</dbReference>
<dbReference type="RefSeq" id="NP_001069498.1">
    <property type="nucleotide sequence ID" value="NM_001076030.1"/>
</dbReference>
<dbReference type="RefSeq" id="XP_005205655.1">
    <property type="nucleotide sequence ID" value="XM_005205598.3"/>
</dbReference>
<dbReference type="SMR" id="Q148N0"/>
<dbReference type="FunCoup" id="Q148N0">
    <property type="interactions" value="2617"/>
</dbReference>
<dbReference type="IntAct" id="Q148N0">
    <property type="interactions" value="1"/>
</dbReference>
<dbReference type="STRING" id="9913.ENSBTAP00000072974"/>
<dbReference type="PaxDb" id="9913-ENSBTAP00000007922"/>
<dbReference type="PeptideAtlas" id="Q148N0"/>
<dbReference type="GeneID" id="534599"/>
<dbReference type="KEGG" id="bta:534599"/>
<dbReference type="CTD" id="4967"/>
<dbReference type="VEuPathDB" id="HostDB:ENSBTAG00000006029"/>
<dbReference type="eggNOG" id="KOG0450">
    <property type="taxonomic scope" value="Eukaryota"/>
</dbReference>
<dbReference type="HOGENOM" id="CLU_004709_1_1_1"/>
<dbReference type="InParanoid" id="Q148N0"/>
<dbReference type="OrthoDB" id="413077at2759"/>
<dbReference type="TreeFam" id="TF300695"/>
<dbReference type="Reactome" id="R-BTA-6783984">
    <property type="pathway name" value="Glycine degradation"/>
</dbReference>
<dbReference type="Reactome" id="R-BTA-9837999">
    <property type="pathway name" value="Mitochondrial protein degradation"/>
</dbReference>
<dbReference type="Reactome" id="R-BTA-9853506">
    <property type="pathway name" value="OGDH complex synthesizes succinyl-CoA from 2-OG"/>
</dbReference>
<dbReference type="Proteomes" id="UP000009136">
    <property type="component" value="Chromosome 4"/>
</dbReference>
<dbReference type="Bgee" id="ENSBTAG00000006029">
    <property type="expression patterns" value="Expressed in corpus luteum and 105 other cell types or tissues"/>
</dbReference>
<dbReference type="GO" id="GO:0005739">
    <property type="term" value="C:mitochondrion"/>
    <property type="evidence" value="ECO:0000250"/>
    <property type="project" value="UniProtKB"/>
</dbReference>
<dbReference type="GO" id="GO:0005634">
    <property type="term" value="C:nucleus"/>
    <property type="evidence" value="ECO:0000250"/>
    <property type="project" value="UniProtKB"/>
</dbReference>
<dbReference type="GO" id="GO:0045252">
    <property type="term" value="C:oxoglutarate dehydrogenase complex"/>
    <property type="evidence" value="ECO:0000250"/>
    <property type="project" value="UniProtKB"/>
</dbReference>
<dbReference type="GO" id="GO:0046872">
    <property type="term" value="F:metal ion binding"/>
    <property type="evidence" value="ECO:0007669"/>
    <property type="project" value="UniProtKB-KW"/>
</dbReference>
<dbReference type="GO" id="GO:0004591">
    <property type="term" value="F:oxoglutarate dehydrogenase (succinyl-transferring) activity"/>
    <property type="evidence" value="ECO:0000250"/>
    <property type="project" value="UniProtKB"/>
</dbReference>
<dbReference type="GO" id="GO:0030976">
    <property type="term" value="F:thiamine pyrophosphate binding"/>
    <property type="evidence" value="ECO:0000250"/>
    <property type="project" value="UniProtKB"/>
</dbReference>
<dbReference type="GO" id="GO:0006103">
    <property type="term" value="P:2-oxoglutarate metabolic process"/>
    <property type="evidence" value="ECO:0000250"/>
    <property type="project" value="UniProtKB"/>
</dbReference>
<dbReference type="GO" id="GO:0006096">
    <property type="term" value="P:glycolytic process"/>
    <property type="evidence" value="ECO:0007669"/>
    <property type="project" value="UniProtKB-KW"/>
</dbReference>
<dbReference type="GO" id="GO:0006104">
    <property type="term" value="P:succinyl-CoA metabolic process"/>
    <property type="evidence" value="ECO:0000250"/>
    <property type="project" value="UniProtKB"/>
</dbReference>
<dbReference type="GO" id="GO:0006099">
    <property type="term" value="P:tricarboxylic acid cycle"/>
    <property type="evidence" value="ECO:0000318"/>
    <property type="project" value="GO_Central"/>
</dbReference>
<dbReference type="CDD" id="cd02016">
    <property type="entry name" value="TPP_E1_OGDC_like"/>
    <property type="match status" value="1"/>
</dbReference>
<dbReference type="FunFam" id="3.40.50.12470:FF:000007">
    <property type="entry name" value="2-oxoglutarate dehydrogenase e1 mitochondrial"/>
    <property type="match status" value="1"/>
</dbReference>
<dbReference type="FunFam" id="3.40.50.970:FF:000002">
    <property type="entry name" value="2-oxoglutarate dehydrogenase, E1 component"/>
    <property type="match status" value="1"/>
</dbReference>
<dbReference type="FunFam" id="1.10.287.1150:FF:000001">
    <property type="entry name" value="2-oxoglutarate dehydrogenase, mitochondrial isoform X1"/>
    <property type="match status" value="1"/>
</dbReference>
<dbReference type="FunFam" id="3.40.50.11610:FF:000008">
    <property type="entry name" value="2-oxoglutarate dehydrogenase, mitochondrial isoform X4"/>
    <property type="match status" value="1"/>
</dbReference>
<dbReference type="Gene3D" id="3.40.50.12470">
    <property type="match status" value="1"/>
</dbReference>
<dbReference type="Gene3D" id="3.40.50.970">
    <property type="match status" value="1"/>
</dbReference>
<dbReference type="Gene3D" id="3.40.50.11610">
    <property type="entry name" value="Multifunctional 2-oxoglutarate metabolism enzyme, C-terminal domain"/>
    <property type="match status" value="1"/>
</dbReference>
<dbReference type="Gene3D" id="1.10.287.1150">
    <property type="entry name" value="TPP helical domain"/>
    <property type="match status" value="1"/>
</dbReference>
<dbReference type="InterPro" id="IPR032106">
    <property type="entry name" value="2-oxogl_dehyd_N"/>
</dbReference>
<dbReference type="InterPro" id="IPR011603">
    <property type="entry name" value="2oxoglutarate_DH_E1"/>
</dbReference>
<dbReference type="InterPro" id="IPR001017">
    <property type="entry name" value="DH_E1"/>
</dbReference>
<dbReference type="InterPro" id="IPR042179">
    <property type="entry name" value="KGD_C_sf"/>
</dbReference>
<dbReference type="InterPro" id="IPR031717">
    <property type="entry name" value="ODO-1/KGD_C"/>
</dbReference>
<dbReference type="InterPro" id="IPR029061">
    <property type="entry name" value="THDP-binding"/>
</dbReference>
<dbReference type="InterPro" id="IPR005475">
    <property type="entry name" value="Transketolase-like_Pyr-bd"/>
</dbReference>
<dbReference type="NCBIfam" id="TIGR00239">
    <property type="entry name" value="2oxo_dh_E1"/>
    <property type="match status" value="1"/>
</dbReference>
<dbReference type="NCBIfam" id="NF006914">
    <property type="entry name" value="PRK09404.1"/>
    <property type="match status" value="1"/>
</dbReference>
<dbReference type="NCBIfam" id="NF008907">
    <property type="entry name" value="PRK12270.1"/>
    <property type="match status" value="1"/>
</dbReference>
<dbReference type="PANTHER" id="PTHR23152">
    <property type="entry name" value="2-OXOGLUTARATE DEHYDROGENASE"/>
    <property type="match status" value="1"/>
</dbReference>
<dbReference type="PANTHER" id="PTHR23152:SF7">
    <property type="entry name" value="2-OXOGLUTARATE DEHYDROGENASE COMPLEX COMPONENT E1"/>
    <property type="match status" value="1"/>
</dbReference>
<dbReference type="Pfam" id="PF16078">
    <property type="entry name" value="2-oxogl_dehyd_N"/>
    <property type="match status" value="1"/>
</dbReference>
<dbReference type="Pfam" id="PF00676">
    <property type="entry name" value="E1_dh"/>
    <property type="match status" value="1"/>
</dbReference>
<dbReference type="Pfam" id="PF16870">
    <property type="entry name" value="OxoGdeHyase_C"/>
    <property type="match status" value="1"/>
</dbReference>
<dbReference type="Pfam" id="PF02779">
    <property type="entry name" value="Transket_pyr"/>
    <property type="match status" value="1"/>
</dbReference>
<dbReference type="PIRSF" id="PIRSF000157">
    <property type="entry name" value="Oxoglu_dh_E1"/>
    <property type="match status" value="1"/>
</dbReference>
<dbReference type="SMART" id="SM00861">
    <property type="entry name" value="Transket_pyr"/>
    <property type="match status" value="1"/>
</dbReference>
<dbReference type="SUPFAM" id="SSF52518">
    <property type="entry name" value="Thiamin diphosphate-binding fold (THDP-binding)"/>
    <property type="match status" value="2"/>
</dbReference>
<gene>
    <name evidence="1" type="primary">OGDH</name>
</gene>
<name>ODO1_BOVIN</name>
<organism>
    <name type="scientific">Bos taurus</name>
    <name type="common">Bovine</name>
    <dbReference type="NCBI Taxonomy" id="9913"/>
    <lineage>
        <taxon>Eukaryota</taxon>
        <taxon>Metazoa</taxon>
        <taxon>Chordata</taxon>
        <taxon>Craniata</taxon>
        <taxon>Vertebrata</taxon>
        <taxon>Euteleostomi</taxon>
        <taxon>Mammalia</taxon>
        <taxon>Eutheria</taxon>
        <taxon>Laurasiatheria</taxon>
        <taxon>Artiodactyla</taxon>
        <taxon>Ruminantia</taxon>
        <taxon>Pecora</taxon>
        <taxon>Bovidae</taxon>
        <taxon>Bovinae</taxon>
        <taxon>Bos</taxon>
    </lineage>
</organism>
<proteinExistence type="evidence at protein level"/>
<sequence>MFHLRTCAAKLRPLTASQTVKTFSQNRPAAARTFGQIRCYTAPVAAEPFLSGTSSNYVEEMYYAWLENPKSVHKSWDIFFRNTNAGAPPGTAYQSPLPLSPGSLSAVARAGPLVEAQPNVDKLVEDHLAVQSLIRAYQIRGHHVAQLDPLGILDADLDSSVPADIISSTDKLGFYGLDESDLDKVFHLPTTTFIGGQESALPLREIIRRLEMAYCQHIGVEFMFINDLEQCQWIRQKFETPGVMQFTNEEKRTLLARLVRSTRFEEFLQRKWSSEKRFGLEGCEVLIPALKTIIDKSSENGVDYVIMGMPHRGRLNVLANVIRKELEQIFCQFDSKLEAADEGSGDVKYHLGMYHRRINRVTDRNITLSLVANPSHLEAADPVVMGKTKAEQFYCGDTEGKKVMSILLHGDAAFAGQGIVYETFHLSDLPSYTTHGTVHVVVNNQIGFTTDPRMARSSPYPTDVARVVNAPIFHVNSDDPEAVMYVCKVAAEWRSTFHKDVVVDLVCYRRNGHNEMDEPMFTQPLMYKQIRKQKPVLQKYAELLVSQGVVNQPEYEEEISKYDKICEEAFARSKDEKILHIKHWLDSPWPGFFTLDGQPRSMTCPSTGLTEDILTHIGNVASSVPVEDFTIHGGLSRILKTRGELVKNRTVDWALAEYMAFGSLLKEGIHIRLSGQDVERGTFSHRHHVLHDQNVDKRTCIPMNHLWPNQAPYTVCNSSLSEYGVLGFELGFAMASPNALVLWEAQFGDFHNTAQCIIDQFICPGQAKWVRQNGIVLLLPHGMEGMGPEHSSARPERFLQMCNDDPDVLPDLKEANFDINQLYDCNWVVVNCSTPGNFFHVLRRQILLPFRKPLIIFTPKSLLRHPEARSNFDEMLPGTHFQRVIPEDGPAAQNPGNVKRLLFCTGKVYYDLTRERKARDMVEQVAITRIEQLSPFPFDLLLQEVQKYPSAELAWCQEEHKNQGYYDYVKPRLRTTISRAKPVWYAGRDPAAAPATGNKKTHLTELQRLLDTAFDLDAFKNFS</sequence>
<accession>Q148N0</accession>
<evidence type="ECO:0000250" key="1">
    <source>
        <dbReference type="UniProtKB" id="Q02218"/>
    </source>
</evidence>
<evidence type="ECO:0000250" key="2">
    <source>
        <dbReference type="UniProtKB" id="Q5XI78"/>
    </source>
</evidence>
<evidence type="ECO:0000250" key="3">
    <source>
        <dbReference type="UniProtKB" id="Q60597"/>
    </source>
</evidence>
<evidence type="ECO:0000250" key="4">
    <source>
        <dbReference type="UniProtKB" id="Q96HY7"/>
    </source>
</evidence>
<evidence type="ECO:0000255" key="5"/>
<evidence type="ECO:0000269" key="6">
    <source>
    </source>
</evidence>
<evidence type="ECO:0000305" key="7"/>
<protein>
    <recommendedName>
        <fullName evidence="1">2-oxoglutarate dehydrogenase complex component E1</fullName>
        <shortName>E1o</shortName>
        <shortName>OGDC-E1</shortName>
        <shortName>OGDH-E1</shortName>
        <ecNumber evidence="1">1.2.4.2</ecNumber>
    </recommendedName>
    <alternativeName>
        <fullName>2-oxoglutarate dehydrogenase, mitochondrial</fullName>
    </alternativeName>
    <alternativeName>
        <fullName>Alpha-ketoglutarate dehydrogenase</fullName>
        <shortName>Alpha-KGDH-E1</shortName>
    </alternativeName>
    <alternativeName>
        <fullName>Thiamine diphosphate (ThDP)-dependent 2-oxoglutarate dehydrogenase</fullName>
    </alternativeName>
</protein>
<reference key="1">
    <citation type="submission" date="2006-06" db="EMBL/GenBank/DDBJ databases">
        <authorList>
            <consortium name="NIH - Mammalian Gene Collection (MGC) project"/>
        </authorList>
    </citation>
    <scope>NUCLEOTIDE SEQUENCE [LARGE SCALE MRNA]</scope>
    <source>
        <strain>Hereford</strain>
        <tissue>Uterus</tissue>
    </source>
</reference>
<reference key="2">
    <citation type="journal article" date="2023" name="Open Biol.">
        <title>MRPS36 provides a structural link in the eukaryotic 2-oxoglutarate dehydrogenase complex.</title>
        <authorList>
            <person name="Hevler J.F."/>
            <person name="Albanese P."/>
            <person name="Cabrera-Orefice A."/>
            <person name="Potter A."/>
            <person name="Jankevics A."/>
            <person name="Misic J."/>
            <person name="Scheltema R.A."/>
            <person name="Brandt U."/>
            <person name="Arnold S."/>
            <person name="Heck A.J.R."/>
        </authorList>
    </citation>
    <scope>SUBCELLULAR LOCATION</scope>
    <scope>SUBUNIT</scope>
</reference>